<keyword id="KW-0472">Membrane</keyword>
<keyword id="KW-1185">Reference proteome</keyword>
<keyword id="KW-0812">Transmembrane</keyword>
<keyword id="KW-1133">Transmembrane helix</keyword>
<sequence length="446" mass="49941">MGRTYFVEEAVGRYLSDLSVKFKPYVTGLLIGQCSPQRDYIIRAARTPPKEEQKEGNTSPSKLDSIDEEWFTAHASQISRMLPGGLLVLSVFIIATPELSKDCQNTLRKLIFSIEKSLTKRRLWKPADEDVSDRAALQICSATKKIVCRTYDVQDPKGSAKPADWKYQSALSASWLSLGCTVNVNIHIPLLATSPNHDLEKNTKNGLNRWSKQIEDSIFLINGQVKDNDIELLEGQKKLRGNTHSGTQIFDVKVLTQLSQGSSHRSTATVQVCSGSINLKGAVKCRAYVHNNKPKVKEAVLALKRDIINTLSDRCEILFEDLILNEGRCKKNFERVYHVLPQRLFVPFAGSNVMLSDYKFGDEAAGEIQERFVEMLDQFVQAEDIHIAEEVNTVGICSLSEKMDDTQLEQLTKATLLLKLQQNMGVVIAVAVAVFASIFSFNYFSD</sequence>
<proteinExistence type="evidence at transcript level"/>
<evidence type="ECO:0000250" key="1"/>
<evidence type="ECO:0000255" key="2"/>
<evidence type="ECO:0000305" key="3"/>
<gene>
    <name type="primary">ODR4</name>
    <name type="ORF">RCJMB04_10l22</name>
</gene>
<accession>Q5ZKH8</accession>
<organism>
    <name type="scientific">Gallus gallus</name>
    <name type="common">Chicken</name>
    <dbReference type="NCBI Taxonomy" id="9031"/>
    <lineage>
        <taxon>Eukaryota</taxon>
        <taxon>Metazoa</taxon>
        <taxon>Chordata</taxon>
        <taxon>Craniata</taxon>
        <taxon>Vertebrata</taxon>
        <taxon>Euteleostomi</taxon>
        <taxon>Archelosauria</taxon>
        <taxon>Archosauria</taxon>
        <taxon>Dinosauria</taxon>
        <taxon>Saurischia</taxon>
        <taxon>Theropoda</taxon>
        <taxon>Coelurosauria</taxon>
        <taxon>Aves</taxon>
        <taxon>Neognathae</taxon>
        <taxon>Galloanserae</taxon>
        <taxon>Galliformes</taxon>
        <taxon>Phasianidae</taxon>
        <taxon>Phasianinae</taxon>
        <taxon>Gallus</taxon>
    </lineage>
</organism>
<dbReference type="EMBL" id="AJ720106">
    <property type="protein sequence ID" value="CAG31765.1"/>
    <property type="molecule type" value="mRNA"/>
</dbReference>
<dbReference type="RefSeq" id="NP_001026443.1">
    <property type="nucleotide sequence ID" value="NM_001031272.1"/>
</dbReference>
<dbReference type="FunCoup" id="Q5ZKH8">
    <property type="interactions" value="1173"/>
</dbReference>
<dbReference type="STRING" id="9031.ENSGALP00000008132"/>
<dbReference type="PaxDb" id="9031-ENSGALP00000008132"/>
<dbReference type="GeneID" id="424455"/>
<dbReference type="KEGG" id="gga:424455"/>
<dbReference type="CTD" id="54953"/>
<dbReference type="VEuPathDB" id="HostDB:geneid_424455"/>
<dbReference type="eggNOG" id="KOG4703">
    <property type="taxonomic scope" value="Eukaryota"/>
</dbReference>
<dbReference type="InParanoid" id="Q5ZKH8"/>
<dbReference type="OrthoDB" id="21458at2759"/>
<dbReference type="PhylomeDB" id="Q5ZKH8"/>
<dbReference type="PRO" id="PR:Q5ZKH8"/>
<dbReference type="Proteomes" id="UP000000539">
    <property type="component" value="Unassembled WGS sequence"/>
</dbReference>
<dbReference type="GO" id="GO:0016020">
    <property type="term" value="C:membrane"/>
    <property type="evidence" value="ECO:0007669"/>
    <property type="project" value="UniProtKB-SubCell"/>
</dbReference>
<dbReference type="GO" id="GO:0008104">
    <property type="term" value="P:protein localization"/>
    <property type="evidence" value="ECO:0000318"/>
    <property type="project" value="GO_Central"/>
</dbReference>
<dbReference type="InterPro" id="IPR029454">
    <property type="entry name" value="ODR-4-like"/>
</dbReference>
<dbReference type="PANTHER" id="PTHR33966">
    <property type="entry name" value="PROTEIN ODR-4 HOMOLOG"/>
    <property type="match status" value="1"/>
</dbReference>
<dbReference type="PANTHER" id="PTHR33966:SF1">
    <property type="entry name" value="PROTEIN ODR-4 HOMOLOG"/>
    <property type="match status" value="1"/>
</dbReference>
<dbReference type="Pfam" id="PF14778">
    <property type="entry name" value="ODR4-like"/>
    <property type="match status" value="1"/>
</dbReference>
<comment type="function">
    <text evidence="1">May play a role in the trafficking of a subset of G-protein coupled receptors.</text>
</comment>
<comment type="subcellular location">
    <subcellularLocation>
        <location evidence="3">Membrane</location>
        <topology evidence="3">Multi-pass membrane protein</topology>
    </subcellularLocation>
</comment>
<comment type="similarity">
    <text evidence="3">Belongs to the ODR-4 family.</text>
</comment>
<name>ODR4_CHICK</name>
<reference key="1">
    <citation type="journal article" date="2005" name="Genome Biol.">
        <title>Full-length cDNAs from chicken bursal lymphocytes to facilitate gene function analysis.</title>
        <authorList>
            <person name="Caldwell R.B."/>
            <person name="Kierzek A.M."/>
            <person name="Arakawa H."/>
            <person name="Bezzubov Y."/>
            <person name="Zaim J."/>
            <person name="Fiedler P."/>
            <person name="Kutter S."/>
            <person name="Blagodatski A."/>
            <person name="Kostovska D."/>
            <person name="Koter M."/>
            <person name="Plachy J."/>
            <person name="Carninci P."/>
            <person name="Hayashizaki Y."/>
            <person name="Buerstedde J.-M."/>
        </authorList>
    </citation>
    <scope>NUCLEOTIDE SEQUENCE [LARGE SCALE MRNA]</scope>
    <source>
        <strain>CB</strain>
        <tissue>Bursa of Fabricius</tissue>
    </source>
</reference>
<feature type="chain" id="PRO_0000304686" description="Protein odr-4 homolog">
    <location>
        <begin position="1"/>
        <end position="446"/>
    </location>
</feature>
<feature type="transmembrane region" description="Helical" evidence="2">
    <location>
        <begin position="81"/>
        <end position="101"/>
    </location>
</feature>
<feature type="transmembrane region" description="Helical" evidence="2">
    <location>
        <begin position="424"/>
        <end position="444"/>
    </location>
</feature>
<protein>
    <recommendedName>
        <fullName>Protein odr-4 homolog</fullName>
    </recommendedName>
</protein>